<evidence type="ECO:0000255" key="1">
    <source>
        <dbReference type="HAMAP-Rule" id="MF_00017"/>
    </source>
</evidence>
<proteinExistence type="inferred from homology"/>
<gene>
    <name evidence="1" type="primary">recR</name>
    <name type="ordered locus">Mlg_1508</name>
</gene>
<name>RECR_ALKEH</name>
<reference key="1">
    <citation type="submission" date="2006-08" db="EMBL/GenBank/DDBJ databases">
        <title>Complete sequence of Alkalilimnicola ehrilichei MLHE-1.</title>
        <authorList>
            <person name="Copeland A."/>
            <person name="Lucas S."/>
            <person name="Lapidus A."/>
            <person name="Barry K."/>
            <person name="Detter J.C."/>
            <person name="Glavina del Rio T."/>
            <person name="Hammon N."/>
            <person name="Israni S."/>
            <person name="Dalin E."/>
            <person name="Tice H."/>
            <person name="Pitluck S."/>
            <person name="Sims D."/>
            <person name="Brettin T."/>
            <person name="Bruce D."/>
            <person name="Han C."/>
            <person name="Tapia R."/>
            <person name="Gilna P."/>
            <person name="Schmutz J."/>
            <person name="Larimer F."/>
            <person name="Land M."/>
            <person name="Hauser L."/>
            <person name="Kyrpides N."/>
            <person name="Mikhailova N."/>
            <person name="Oremland R.S."/>
            <person name="Hoeft S.E."/>
            <person name="Switzer-Blum J."/>
            <person name="Kulp T."/>
            <person name="King G."/>
            <person name="Tabita R."/>
            <person name="Witte B."/>
            <person name="Santini J.M."/>
            <person name="Basu P."/>
            <person name="Hollibaugh J.T."/>
            <person name="Xie G."/>
            <person name="Stolz J.F."/>
            <person name="Richardson P."/>
        </authorList>
    </citation>
    <scope>NUCLEOTIDE SEQUENCE [LARGE SCALE GENOMIC DNA]</scope>
    <source>
        <strain>ATCC BAA-1101 / DSM 17681 / MLHE-1</strain>
    </source>
</reference>
<accession>Q0A8I0</accession>
<keyword id="KW-0227">DNA damage</keyword>
<keyword id="KW-0233">DNA recombination</keyword>
<keyword id="KW-0234">DNA repair</keyword>
<keyword id="KW-0479">Metal-binding</keyword>
<keyword id="KW-1185">Reference proteome</keyword>
<keyword id="KW-0862">Zinc</keyword>
<keyword id="KW-0863">Zinc-finger</keyword>
<feature type="chain" id="PRO_1000001507" description="Recombination protein RecR">
    <location>
        <begin position="1"/>
        <end position="199"/>
    </location>
</feature>
<feature type="domain" description="Toprim" evidence="1">
    <location>
        <begin position="80"/>
        <end position="175"/>
    </location>
</feature>
<feature type="zinc finger region" description="C4-type" evidence="1">
    <location>
        <begin position="57"/>
        <end position="72"/>
    </location>
</feature>
<organism>
    <name type="scientific">Alkalilimnicola ehrlichii (strain ATCC BAA-1101 / DSM 17681 / MLHE-1)</name>
    <dbReference type="NCBI Taxonomy" id="187272"/>
    <lineage>
        <taxon>Bacteria</taxon>
        <taxon>Pseudomonadati</taxon>
        <taxon>Pseudomonadota</taxon>
        <taxon>Gammaproteobacteria</taxon>
        <taxon>Chromatiales</taxon>
        <taxon>Ectothiorhodospiraceae</taxon>
        <taxon>Alkalilimnicola</taxon>
    </lineage>
</organism>
<comment type="function">
    <text evidence="1">May play a role in DNA repair. It seems to be involved in an RecBC-independent recombinational process of DNA repair. It may act with RecF and RecO.</text>
</comment>
<comment type="similarity">
    <text evidence="1">Belongs to the RecR family.</text>
</comment>
<dbReference type="EMBL" id="CP000453">
    <property type="protein sequence ID" value="ABI56857.1"/>
    <property type="molecule type" value="Genomic_DNA"/>
</dbReference>
<dbReference type="RefSeq" id="WP_011629252.1">
    <property type="nucleotide sequence ID" value="NC_008340.1"/>
</dbReference>
<dbReference type="SMR" id="Q0A8I0"/>
<dbReference type="KEGG" id="aeh:Mlg_1508"/>
<dbReference type="eggNOG" id="COG0353">
    <property type="taxonomic scope" value="Bacteria"/>
</dbReference>
<dbReference type="HOGENOM" id="CLU_060739_1_2_6"/>
<dbReference type="OrthoDB" id="9802672at2"/>
<dbReference type="Proteomes" id="UP000001962">
    <property type="component" value="Chromosome"/>
</dbReference>
<dbReference type="GO" id="GO:0003677">
    <property type="term" value="F:DNA binding"/>
    <property type="evidence" value="ECO:0007669"/>
    <property type="project" value="UniProtKB-UniRule"/>
</dbReference>
<dbReference type="GO" id="GO:0008270">
    <property type="term" value="F:zinc ion binding"/>
    <property type="evidence" value="ECO:0007669"/>
    <property type="project" value="UniProtKB-KW"/>
</dbReference>
<dbReference type="GO" id="GO:0006310">
    <property type="term" value="P:DNA recombination"/>
    <property type="evidence" value="ECO:0007669"/>
    <property type="project" value="UniProtKB-UniRule"/>
</dbReference>
<dbReference type="GO" id="GO:0006281">
    <property type="term" value="P:DNA repair"/>
    <property type="evidence" value="ECO:0007669"/>
    <property type="project" value="UniProtKB-UniRule"/>
</dbReference>
<dbReference type="CDD" id="cd01025">
    <property type="entry name" value="TOPRIM_recR"/>
    <property type="match status" value="1"/>
</dbReference>
<dbReference type="FunFam" id="1.10.8.420:FF:000001">
    <property type="entry name" value="Recombination protein RecR"/>
    <property type="match status" value="1"/>
</dbReference>
<dbReference type="FunFam" id="3.40.1360.10:FF:000001">
    <property type="entry name" value="Recombination protein RecR"/>
    <property type="match status" value="1"/>
</dbReference>
<dbReference type="Gene3D" id="3.40.1360.10">
    <property type="match status" value="1"/>
</dbReference>
<dbReference type="Gene3D" id="6.10.250.240">
    <property type="match status" value="1"/>
</dbReference>
<dbReference type="Gene3D" id="1.10.8.420">
    <property type="entry name" value="RecR Domain 1"/>
    <property type="match status" value="1"/>
</dbReference>
<dbReference type="HAMAP" id="MF_00017">
    <property type="entry name" value="RecR"/>
    <property type="match status" value="1"/>
</dbReference>
<dbReference type="InterPro" id="IPR000093">
    <property type="entry name" value="DNA_Rcmb_RecR"/>
</dbReference>
<dbReference type="InterPro" id="IPR023627">
    <property type="entry name" value="Rcmb_RecR"/>
</dbReference>
<dbReference type="InterPro" id="IPR015967">
    <property type="entry name" value="Rcmb_RecR_Znf"/>
</dbReference>
<dbReference type="InterPro" id="IPR006171">
    <property type="entry name" value="TOPRIM_dom"/>
</dbReference>
<dbReference type="InterPro" id="IPR034137">
    <property type="entry name" value="TOPRIM_RecR"/>
</dbReference>
<dbReference type="NCBIfam" id="TIGR00615">
    <property type="entry name" value="recR"/>
    <property type="match status" value="1"/>
</dbReference>
<dbReference type="PANTHER" id="PTHR30446">
    <property type="entry name" value="RECOMBINATION PROTEIN RECR"/>
    <property type="match status" value="1"/>
</dbReference>
<dbReference type="PANTHER" id="PTHR30446:SF0">
    <property type="entry name" value="RECOMBINATION PROTEIN RECR"/>
    <property type="match status" value="1"/>
</dbReference>
<dbReference type="Pfam" id="PF21175">
    <property type="entry name" value="RecR_C"/>
    <property type="match status" value="1"/>
</dbReference>
<dbReference type="Pfam" id="PF21176">
    <property type="entry name" value="RecR_HhH"/>
    <property type="match status" value="1"/>
</dbReference>
<dbReference type="Pfam" id="PF02132">
    <property type="entry name" value="RecR_ZnF"/>
    <property type="match status" value="1"/>
</dbReference>
<dbReference type="Pfam" id="PF13662">
    <property type="entry name" value="Toprim_4"/>
    <property type="match status" value="1"/>
</dbReference>
<dbReference type="SMART" id="SM00493">
    <property type="entry name" value="TOPRIM"/>
    <property type="match status" value="1"/>
</dbReference>
<dbReference type="SUPFAM" id="SSF111304">
    <property type="entry name" value="Recombination protein RecR"/>
    <property type="match status" value="1"/>
</dbReference>
<dbReference type="PROSITE" id="PS01300">
    <property type="entry name" value="RECR"/>
    <property type="match status" value="1"/>
</dbReference>
<dbReference type="PROSITE" id="PS50880">
    <property type="entry name" value="TOPRIM"/>
    <property type="match status" value="1"/>
</dbReference>
<sequence length="199" mass="21875">MRYSPLIDQLIESLRCLPGVGPRSAQRMAFHLLQRDRDGGRRLATAIREAMDQVGHCRQCRVLTEEPVCGLCASDRRDRSLLCVVEGPADVFALEQATDFRGLYFVLMGRLSPLDGVGPEALGLDRLEARLAEGEVQEVILATSPTVEGEATSHYIAELAHQRGVRTTRIAHGVPMGGELEYVDSGTLSHAFAGRRDYD</sequence>
<protein>
    <recommendedName>
        <fullName evidence="1">Recombination protein RecR</fullName>
    </recommendedName>
</protein>